<feature type="chain" id="PRO_0000121813" description="tRNA pseudouridine synthase B">
    <location>
        <begin position="1"/>
        <end position="255"/>
    </location>
</feature>
<feature type="active site" description="Nucleophile" evidence="1">
    <location>
        <position position="52"/>
    </location>
</feature>
<feature type="binding site" evidence="1">
    <location>
        <position position="80"/>
    </location>
    <ligand>
        <name>substrate</name>
    </ligand>
</feature>
<feature type="binding site" evidence="1">
    <location>
        <position position="183"/>
    </location>
    <ligand>
        <name>substrate</name>
    </ligand>
</feature>
<feature type="binding site" evidence="1">
    <location>
        <position position="204"/>
    </location>
    <ligand>
        <name>substrate</name>
    </ligand>
</feature>
<name>TRUB_BLOFL</name>
<gene>
    <name evidence="1" type="primary">truB</name>
    <name type="ordered locus">Bfl106</name>
</gene>
<proteinExistence type="inferred from homology"/>
<reference key="1">
    <citation type="journal article" date="2003" name="Proc. Natl. Acad. Sci. U.S.A.">
        <title>The genome sequence of Blochmannia floridanus: comparative analysis of reduced genomes.</title>
        <authorList>
            <person name="Gil R."/>
            <person name="Silva F.J."/>
            <person name="Zientz E."/>
            <person name="Delmotte F."/>
            <person name="Gonzalez-Candelas F."/>
            <person name="Latorre A."/>
            <person name="Rausell C."/>
            <person name="Kamerbeek J."/>
            <person name="Gadau J."/>
            <person name="Hoelldobler B."/>
            <person name="van Ham R.C.H.J."/>
            <person name="Gross R."/>
            <person name="Moya A."/>
        </authorList>
    </citation>
    <scope>NUCLEOTIDE SEQUENCE [LARGE SCALE GENOMIC DNA]</scope>
</reference>
<accession>P59877</accession>
<protein>
    <recommendedName>
        <fullName evidence="1">tRNA pseudouridine synthase B</fullName>
        <ecNumber evidence="1">5.4.99.25</ecNumber>
    </recommendedName>
    <alternativeName>
        <fullName evidence="1">tRNA pseudouridine(55) synthase</fullName>
        <shortName evidence="1">Psi55 synthase</shortName>
    </alternativeName>
    <alternativeName>
        <fullName evidence="1">tRNA pseudouridylate synthase</fullName>
    </alternativeName>
    <alternativeName>
        <fullName evidence="1">tRNA-uridine isomerase</fullName>
    </alternativeName>
</protein>
<organism>
    <name type="scientific">Blochmanniella floridana</name>
    <dbReference type="NCBI Taxonomy" id="203907"/>
    <lineage>
        <taxon>Bacteria</taxon>
        <taxon>Pseudomonadati</taxon>
        <taxon>Pseudomonadota</taxon>
        <taxon>Gammaproteobacteria</taxon>
        <taxon>Enterobacterales</taxon>
        <taxon>Enterobacteriaceae</taxon>
        <taxon>ant endosymbionts</taxon>
        <taxon>Candidatus Blochmanniella</taxon>
    </lineage>
</organism>
<dbReference type="EC" id="5.4.99.25" evidence="1"/>
<dbReference type="EMBL" id="BX248583">
    <property type="protein sequence ID" value="CAD83627.1"/>
    <property type="molecule type" value="Genomic_DNA"/>
</dbReference>
<dbReference type="SMR" id="P59877"/>
<dbReference type="STRING" id="203907.Bfl106"/>
<dbReference type="KEGG" id="bfl:Bfl106"/>
<dbReference type="eggNOG" id="COG0130">
    <property type="taxonomic scope" value="Bacteria"/>
</dbReference>
<dbReference type="HOGENOM" id="CLU_032087_2_0_6"/>
<dbReference type="OrthoDB" id="9802309at2"/>
<dbReference type="Proteomes" id="UP000002192">
    <property type="component" value="Chromosome"/>
</dbReference>
<dbReference type="GO" id="GO:0003723">
    <property type="term" value="F:RNA binding"/>
    <property type="evidence" value="ECO:0007669"/>
    <property type="project" value="InterPro"/>
</dbReference>
<dbReference type="GO" id="GO:0160148">
    <property type="term" value="F:tRNA pseudouridine(55) synthase activity"/>
    <property type="evidence" value="ECO:0007669"/>
    <property type="project" value="UniProtKB-EC"/>
</dbReference>
<dbReference type="GO" id="GO:1990481">
    <property type="term" value="P:mRNA pseudouridine synthesis"/>
    <property type="evidence" value="ECO:0007669"/>
    <property type="project" value="TreeGrafter"/>
</dbReference>
<dbReference type="GO" id="GO:0031119">
    <property type="term" value="P:tRNA pseudouridine synthesis"/>
    <property type="evidence" value="ECO:0007669"/>
    <property type="project" value="UniProtKB-UniRule"/>
</dbReference>
<dbReference type="CDD" id="cd02573">
    <property type="entry name" value="PseudoU_synth_EcTruB"/>
    <property type="match status" value="1"/>
</dbReference>
<dbReference type="Gene3D" id="3.30.2350.10">
    <property type="entry name" value="Pseudouridine synthase"/>
    <property type="match status" value="1"/>
</dbReference>
<dbReference type="HAMAP" id="MF_01080">
    <property type="entry name" value="TruB_bact"/>
    <property type="match status" value="1"/>
</dbReference>
<dbReference type="InterPro" id="IPR020103">
    <property type="entry name" value="PsdUridine_synth_cat_dom_sf"/>
</dbReference>
<dbReference type="InterPro" id="IPR002501">
    <property type="entry name" value="PsdUridine_synth_N"/>
</dbReference>
<dbReference type="InterPro" id="IPR014780">
    <property type="entry name" value="tRNA_psdUridine_synth_TruB"/>
</dbReference>
<dbReference type="InterPro" id="IPR032819">
    <property type="entry name" value="TruB_C"/>
</dbReference>
<dbReference type="NCBIfam" id="TIGR00431">
    <property type="entry name" value="TruB"/>
    <property type="match status" value="1"/>
</dbReference>
<dbReference type="PANTHER" id="PTHR13767:SF2">
    <property type="entry name" value="PSEUDOURIDYLATE SYNTHASE TRUB1"/>
    <property type="match status" value="1"/>
</dbReference>
<dbReference type="PANTHER" id="PTHR13767">
    <property type="entry name" value="TRNA-PSEUDOURIDINE SYNTHASE"/>
    <property type="match status" value="1"/>
</dbReference>
<dbReference type="Pfam" id="PF16198">
    <property type="entry name" value="TruB_C_2"/>
    <property type="match status" value="1"/>
</dbReference>
<dbReference type="Pfam" id="PF01509">
    <property type="entry name" value="TruB_N"/>
    <property type="match status" value="1"/>
</dbReference>
<dbReference type="SUPFAM" id="SSF55120">
    <property type="entry name" value="Pseudouridine synthase"/>
    <property type="match status" value="1"/>
</dbReference>
<sequence>MQRYVNFFDKNRRDVHGLLLLDKPTGFSSSFFLNKIKKLFYAKKVGYIGTLDPIATGMLPICFGKATKFASYLLNSDKRYRVLVKLGESTDTFDASGVIIRIADVQCNKEKIEECLKSFLGTSLQIPPMFSSLKYQGLPLYKYARRGVNIPRKSRTIHVYSLYCLNQLNSIIELEIHCSKGTYVRSIVNDIGEYLGCGAHIISLRRLMVGQYIASMMVNIKTIESIFFDKDLNDLEVLDKLDNLLISTETIMCSF</sequence>
<keyword id="KW-0413">Isomerase</keyword>
<keyword id="KW-1185">Reference proteome</keyword>
<keyword id="KW-0819">tRNA processing</keyword>
<comment type="function">
    <text evidence="1">Responsible for synthesis of pseudouridine from uracil-55 in the psi GC loop of transfer RNAs.</text>
</comment>
<comment type="catalytic activity">
    <reaction evidence="1">
        <text>uridine(55) in tRNA = pseudouridine(55) in tRNA</text>
        <dbReference type="Rhea" id="RHEA:42532"/>
        <dbReference type="Rhea" id="RHEA-COMP:10101"/>
        <dbReference type="Rhea" id="RHEA-COMP:10102"/>
        <dbReference type="ChEBI" id="CHEBI:65314"/>
        <dbReference type="ChEBI" id="CHEBI:65315"/>
        <dbReference type="EC" id="5.4.99.25"/>
    </reaction>
</comment>
<comment type="similarity">
    <text evidence="1">Belongs to the pseudouridine synthase TruB family. Type 1 subfamily.</text>
</comment>
<evidence type="ECO:0000255" key="1">
    <source>
        <dbReference type="HAMAP-Rule" id="MF_01080"/>
    </source>
</evidence>